<proteinExistence type="evidence at transcript level"/>
<gene>
    <name evidence="11" type="primary">zdhhc2</name>
    <name evidence="10" type="synonym">dhhc2</name>
</gene>
<evidence type="ECO:0000250" key="1">
    <source>
        <dbReference type="UniProtKB" id="P59267"/>
    </source>
</evidence>
<evidence type="ECO:0000250" key="2">
    <source>
        <dbReference type="UniProtKB" id="Q8IUH5"/>
    </source>
</evidence>
<evidence type="ECO:0000250" key="3">
    <source>
        <dbReference type="UniProtKB" id="Q9JKR5"/>
    </source>
</evidence>
<evidence type="ECO:0000250" key="4">
    <source>
        <dbReference type="UniProtKB" id="Q9UIJ5"/>
    </source>
</evidence>
<evidence type="ECO:0000255" key="5"/>
<evidence type="ECO:0000255" key="6">
    <source>
        <dbReference type="PROSITE-ProRule" id="PRU00067"/>
    </source>
</evidence>
<evidence type="ECO:0000256" key="7">
    <source>
        <dbReference type="SAM" id="MobiDB-lite"/>
    </source>
</evidence>
<evidence type="ECO:0000269" key="8">
    <source>
    </source>
</evidence>
<evidence type="ECO:0000269" key="9">
    <source>
    </source>
</evidence>
<evidence type="ECO:0000303" key="10">
    <source>
    </source>
</evidence>
<evidence type="ECO:0000303" key="11">
    <source>
    </source>
</evidence>
<evidence type="ECO:0000305" key="12"/>
<evidence type="ECO:0000305" key="13">
    <source>
    </source>
</evidence>
<name>ZDHC2_DANRE</name>
<accession>Q5BLG4</accession>
<keyword id="KW-0012">Acyltransferase</keyword>
<keyword id="KW-1003">Cell membrane</keyword>
<keyword id="KW-0256">Endoplasmic reticulum</keyword>
<keyword id="KW-0967">Endosome</keyword>
<keyword id="KW-0333">Golgi apparatus</keyword>
<keyword id="KW-0449">Lipoprotein</keyword>
<keyword id="KW-0472">Membrane</keyword>
<keyword id="KW-0564">Palmitate</keyword>
<keyword id="KW-1185">Reference proteome</keyword>
<keyword id="KW-0770">Synapse</keyword>
<keyword id="KW-0808">Transferase</keyword>
<keyword id="KW-0812">Transmembrane</keyword>
<keyword id="KW-1133">Transmembrane helix</keyword>
<organism>
    <name type="scientific">Danio rerio</name>
    <name type="common">Zebrafish</name>
    <name type="synonym">Brachydanio rerio</name>
    <dbReference type="NCBI Taxonomy" id="7955"/>
    <lineage>
        <taxon>Eukaryota</taxon>
        <taxon>Metazoa</taxon>
        <taxon>Chordata</taxon>
        <taxon>Craniata</taxon>
        <taxon>Vertebrata</taxon>
        <taxon>Euteleostomi</taxon>
        <taxon>Actinopterygii</taxon>
        <taxon>Neopterygii</taxon>
        <taxon>Teleostei</taxon>
        <taxon>Ostariophysi</taxon>
        <taxon>Cypriniformes</taxon>
        <taxon>Danionidae</taxon>
        <taxon>Danioninae</taxon>
        <taxon>Danio</taxon>
    </lineage>
</organism>
<protein>
    <recommendedName>
        <fullName evidence="12">Palmitoyltransferase ZDHHC2</fullName>
        <ecNumber evidence="4">2.3.1.225</ecNumber>
    </recommendedName>
    <alternativeName>
        <fullName evidence="1">Acyltransferase ZDHHC2</fullName>
        <ecNumber evidence="1">2.3.1.-</ecNumber>
    </alternativeName>
    <alternativeName>
        <fullName evidence="10">DHHC domain-containing protein 2</fullName>
    </alternativeName>
    <alternativeName>
        <fullName evidence="13">Zinc finger DHHC domain-containing protein 2</fullName>
    </alternativeName>
</protein>
<feature type="chain" id="PRO_0000449926" description="Palmitoyltransferase ZDHHC2">
    <location>
        <begin position="1"/>
        <end position="361"/>
    </location>
</feature>
<feature type="topological domain" description="Cytoplasmic" evidence="12">
    <location>
        <begin position="1"/>
        <end position="15"/>
    </location>
</feature>
<feature type="transmembrane region" description="Helical" evidence="5">
    <location>
        <begin position="16"/>
        <end position="36"/>
    </location>
</feature>
<feature type="topological domain" description="Lumenal" evidence="12">
    <location>
        <begin position="37"/>
        <end position="50"/>
    </location>
</feature>
<feature type="transmembrane region" description="Helical" evidence="5">
    <location>
        <begin position="51"/>
        <end position="71"/>
    </location>
</feature>
<feature type="topological domain" description="Cytoplasmic" evidence="12">
    <location>
        <begin position="72"/>
        <end position="167"/>
    </location>
</feature>
<feature type="transmembrane region" description="Helical" evidence="5">
    <location>
        <begin position="168"/>
        <end position="188"/>
    </location>
</feature>
<feature type="topological domain" description="Lumenal" evidence="12">
    <location>
        <begin position="189"/>
        <end position="207"/>
    </location>
</feature>
<feature type="transmembrane region" description="Helical" evidence="5">
    <location>
        <begin position="208"/>
        <end position="228"/>
    </location>
</feature>
<feature type="topological domain" description="Cytoplasmic" evidence="12">
    <location>
        <begin position="229"/>
        <end position="361"/>
    </location>
</feature>
<feature type="domain" description="DHHC" evidence="6">
    <location>
        <begin position="124"/>
        <end position="174"/>
    </location>
</feature>
<feature type="region of interest" description="Mediates localization to plasma membrane and recycling endosomes" evidence="1">
    <location>
        <begin position="296"/>
        <end position="361"/>
    </location>
</feature>
<feature type="region of interest" description="Disordered" evidence="7">
    <location>
        <begin position="299"/>
        <end position="361"/>
    </location>
</feature>
<feature type="short sequence motif" description="Non-canonical dileucine endocytic signal" evidence="1">
    <location>
        <begin position="333"/>
        <end position="334"/>
    </location>
</feature>
<feature type="short sequence motif" description="NPxY-like endocytic signal" evidence="1">
    <location>
        <begin position="352"/>
        <end position="355"/>
    </location>
</feature>
<feature type="compositionally biased region" description="Pro residues" evidence="7">
    <location>
        <begin position="299"/>
        <end position="308"/>
    </location>
</feature>
<feature type="compositionally biased region" description="Polar residues" evidence="7">
    <location>
        <begin position="331"/>
        <end position="340"/>
    </location>
</feature>
<feature type="active site" description="S-palmitoyl cysteine intermediate" evidence="6">
    <location>
        <position position="154"/>
    </location>
</feature>
<comment type="function">
    <text evidence="1 4">Palmitoyltransferase that catalyzes the addition of palmitate onto various protein substrates and is involved in a variety of cellular processes. Has no stringent fatty acid selectivity and in addition to palmitate can also transfer onto target proteins myristate from tetradecanoyl-CoA and stearate from octadecanoyl-CoA (By similarity).</text>
</comment>
<comment type="catalytic activity">
    <reaction evidence="4">
        <text>L-cysteinyl-[protein] + hexadecanoyl-CoA = S-hexadecanoyl-L-cysteinyl-[protein] + CoA</text>
        <dbReference type="Rhea" id="RHEA:36683"/>
        <dbReference type="Rhea" id="RHEA-COMP:10131"/>
        <dbReference type="Rhea" id="RHEA-COMP:11032"/>
        <dbReference type="ChEBI" id="CHEBI:29950"/>
        <dbReference type="ChEBI" id="CHEBI:57287"/>
        <dbReference type="ChEBI" id="CHEBI:57379"/>
        <dbReference type="ChEBI" id="CHEBI:74151"/>
        <dbReference type="EC" id="2.3.1.225"/>
    </reaction>
    <physiologicalReaction direction="left-to-right" evidence="4">
        <dbReference type="Rhea" id="RHEA:36684"/>
    </physiologicalReaction>
</comment>
<comment type="catalytic activity">
    <reaction evidence="1">
        <text>L-cysteinyl-[protein] + tetradecanoyl-CoA = S-tetradecanoyl-L-cysteinyl-[protein] + CoA</text>
        <dbReference type="Rhea" id="RHEA:59736"/>
        <dbReference type="Rhea" id="RHEA-COMP:10131"/>
        <dbReference type="Rhea" id="RHEA-COMP:15433"/>
        <dbReference type="ChEBI" id="CHEBI:29950"/>
        <dbReference type="ChEBI" id="CHEBI:57287"/>
        <dbReference type="ChEBI" id="CHEBI:57385"/>
        <dbReference type="ChEBI" id="CHEBI:143199"/>
    </reaction>
    <physiologicalReaction direction="left-to-right" evidence="1">
        <dbReference type="Rhea" id="RHEA:59737"/>
    </physiologicalReaction>
</comment>
<comment type="catalytic activity">
    <reaction evidence="1">
        <text>L-cysteinyl-[protein] + octadecanoyl-CoA = S-octadecanoyl-L-cysteinyl-[protein] + CoA</text>
        <dbReference type="Rhea" id="RHEA:59740"/>
        <dbReference type="Rhea" id="RHEA-COMP:10131"/>
        <dbReference type="Rhea" id="RHEA-COMP:15434"/>
        <dbReference type="ChEBI" id="CHEBI:29950"/>
        <dbReference type="ChEBI" id="CHEBI:57287"/>
        <dbReference type="ChEBI" id="CHEBI:57394"/>
        <dbReference type="ChEBI" id="CHEBI:143200"/>
    </reaction>
    <physiologicalReaction direction="left-to-right" evidence="1">
        <dbReference type="Rhea" id="RHEA:59741"/>
    </physiologicalReaction>
</comment>
<comment type="subunit">
    <text evidence="4">Monomer. Homodimer. The monomeric form has a higher catalytic activity.</text>
</comment>
<comment type="subcellular location">
    <subcellularLocation>
        <location evidence="4">Endoplasmic reticulum membrane</location>
        <topology evidence="5">Multi-pass membrane protein</topology>
    </subcellularLocation>
    <subcellularLocation>
        <location evidence="4">Golgi apparatus membrane</location>
        <topology evidence="5">Multi-pass membrane protein</topology>
    </subcellularLocation>
    <subcellularLocation>
        <location evidence="3">Postsynaptic density</location>
    </subcellularLocation>
    <subcellularLocation>
        <location evidence="1">Postsynaptic recycling endosome membrane</location>
        <topology evidence="5">Multi-pass membrane protein</topology>
    </subcellularLocation>
    <subcellularLocation>
        <location evidence="4">Cell membrane</location>
        <topology evidence="5">Multi-pass membrane protein</topology>
    </subcellularLocation>
    <text evidence="3">Translocates to postsynaptic density when synaptic activity decreases.</text>
</comment>
<comment type="developmental stage">
    <text evidence="8 9">Probably maternally supplied, the zygotic expression is detected early during development at the 512-cell stage but decreases after 7.5 hpf.</text>
</comment>
<comment type="domain">
    <text evidence="2">The DHHC domain is required for palmitoyltransferase activity.</text>
</comment>
<comment type="PTM">
    <text evidence="4">Autopalmitoylated.</text>
</comment>
<comment type="similarity">
    <text evidence="12">Belongs to the DHHC palmitoyltransferase family.</text>
</comment>
<reference key="1">
    <citation type="journal article" date="2013" name="Nature">
        <title>The zebrafish reference genome sequence and its relationship to the human genome.</title>
        <authorList>
            <person name="Howe K."/>
            <person name="Clark M.D."/>
            <person name="Torroja C.F."/>
            <person name="Torrance J."/>
            <person name="Berthelot C."/>
            <person name="Muffato M."/>
            <person name="Collins J.E."/>
            <person name="Humphray S."/>
            <person name="McLaren K."/>
            <person name="Matthews L."/>
            <person name="McLaren S."/>
            <person name="Sealy I."/>
            <person name="Caccamo M."/>
            <person name="Churcher C."/>
            <person name="Scott C."/>
            <person name="Barrett J.C."/>
            <person name="Koch R."/>
            <person name="Rauch G.J."/>
            <person name="White S."/>
            <person name="Chow W."/>
            <person name="Kilian B."/>
            <person name="Quintais L.T."/>
            <person name="Guerra-Assuncao J.A."/>
            <person name="Zhou Y."/>
            <person name="Gu Y."/>
            <person name="Yen J."/>
            <person name="Vogel J.H."/>
            <person name="Eyre T."/>
            <person name="Redmond S."/>
            <person name="Banerjee R."/>
            <person name="Chi J."/>
            <person name="Fu B."/>
            <person name="Langley E."/>
            <person name="Maguire S.F."/>
            <person name="Laird G.K."/>
            <person name="Lloyd D."/>
            <person name="Kenyon E."/>
            <person name="Donaldson S."/>
            <person name="Sehra H."/>
            <person name="Almeida-King J."/>
            <person name="Loveland J."/>
            <person name="Trevanion S."/>
            <person name="Jones M."/>
            <person name="Quail M."/>
            <person name="Willey D."/>
            <person name="Hunt A."/>
            <person name="Burton J."/>
            <person name="Sims S."/>
            <person name="McLay K."/>
            <person name="Plumb B."/>
            <person name="Davis J."/>
            <person name="Clee C."/>
            <person name="Oliver K."/>
            <person name="Clark R."/>
            <person name="Riddle C."/>
            <person name="Elliot D."/>
            <person name="Threadgold G."/>
            <person name="Harden G."/>
            <person name="Ware D."/>
            <person name="Begum S."/>
            <person name="Mortimore B."/>
            <person name="Kerry G."/>
            <person name="Heath P."/>
            <person name="Phillimore B."/>
            <person name="Tracey A."/>
            <person name="Corby N."/>
            <person name="Dunn M."/>
            <person name="Johnson C."/>
            <person name="Wood J."/>
            <person name="Clark S."/>
            <person name="Pelan S."/>
            <person name="Griffiths G."/>
            <person name="Smith M."/>
            <person name="Glithero R."/>
            <person name="Howden P."/>
            <person name="Barker N."/>
            <person name="Lloyd C."/>
            <person name="Stevens C."/>
            <person name="Harley J."/>
            <person name="Holt K."/>
            <person name="Panagiotidis G."/>
            <person name="Lovell J."/>
            <person name="Beasley H."/>
            <person name="Henderson C."/>
            <person name="Gordon D."/>
            <person name="Auger K."/>
            <person name="Wright D."/>
            <person name="Collins J."/>
            <person name="Raisen C."/>
            <person name="Dyer L."/>
            <person name="Leung K."/>
            <person name="Robertson L."/>
            <person name="Ambridge K."/>
            <person name="Leongamornlert D."/>
            <person name="McGuire S."/>
            <person name="Gilderthorp R."/>
            <person name="Griffiths C."/>
            <person name="Manthravadi D."/>
            <person name="Nichol S."/>
            <person name="Barker G."/>
            <person name="Whitehead S."/>
            <person name="Kay M."/>
            <person name="Brown J."/>
            <person name="Murnane C."/>
            <person name="Gray E."/>
            <person name="Humphries M."/>
            <person name="Sycamore N."/>
            <person name="Barker D."/>
            <person name="Saunders D."/>
            <person name="Wallis J."/>
            <person name="Babbage A."/>
            <person name="Hammond S."/>
            <person name="Mashreghi-Mohammadi M."/>
            <person name="Barr L."/>
            <person name="Martin S."/>
            <person name="Wray P."/>
            <person name="Ellington A."/>
            <person name="Matthews N."/>
            <person name="Ellwood M."/>
            <person name="Woodmansey R."/>
            <person name="Clark G."/>
            <person name="Cooper J."/>
            <person name="Tromans A."/>
            <person name="Grafham D."/>
            <person name="Skuce C."/>
            <person name="Pandian R."/>
            <person name="Andrews R."/>
            <person name="Harrison E."/>
            <person name="Kimberley A."/>
            <person name="Garnett J."/>
            <person name="Fosker N."/>
            <person name="Hall R."/>
            <person name="Garner P."/>
            <person name="Kelly D."/>
            <person name="Bird C."/>
            <person name="Palmer S."/>
            <person name="Gehring I."/>
            <person name="Berger A."/>
            <person name="Dooley C.M."/>
            <person name="Ersan-Urun Z."/>
            <person name="Eser C."/>
            <person name="Geiger H."/>
            <person name="Geisler M."/>
            <person name="Karotki L."/>
            <person name="Kirn A."/>
            <person name="Konantz J."/>
            <person name="Konantz M."/>
            <person name="Oberlander M."/>
            <person name="Rudolph-Geiger S."/>
            <person name="Teucke M."/>
            <person name="Lanz C."/>
            <person name="Raddatz G."/>
            <person name="Osoegawa K."/>
            <person name="Zhu B."/>
            <person name="Rapp A."/>
            <person name="Widaa S."/>
            <person name="Langford C."/>
            <person name="Yang F."/>
            <person name="Schuster S.C."/>
            <person name="Carter N.P."/>
            <person name="Harrow J."/>
            <person name="Ning Z."/>
            <person name="Herrero J."/>
            <person name="Searle S.M."/>
            <person name="Enright A."/>
            <person name="Geisler R."/>
            <person name="Plasterk R.H."/>
            <person name="Lee C."/>
            <person name="Westerfield M."/>
            <person name="de Jong P.J."/>
            <person name="Zon L.I."/>
            <person name="Postlethwait J.H."/>
            <person name="Nusslein-Volhard C."/>
            <person name="Hubbard T.J."/>
            <person name="Roest Crollius H."/>
            <person name="Rogers J."/>
            <person name="Stemple D.L."/>
        </authorList>
    </citation>
    <scope>NUCLEOTIDE SEQUENCE [LARGE SCALE GENOMIC DNA]</scope>
    <source>
        <strain>Tuebingen</strain>
    </source>
</reference>
<reference key="2">
    <citation type="submission" date="2005-02" db="EMBL/GenBank/DDBJ databases">
        <authorList>
            <consortium name="NIH - Zebrafish Gene Collection (ZGC) project"/>
        </authorList>
    </citation>
    <scope>NUCLEOTIDE SEQUENCE [LARGE SCALE MRNA]</scope>
    <source>
        <tissue>Embryo</tissue>
    </source>
</reference>
<reference key="3">
    <citation type="journal article" date="2015" name="Neurotoxicol. Teratol.">
        <title>2-Bromopalmitate impairs neural stem/progenitor cell proliferation, promotes cell apoptosis and induces malformation in zebrafish embryonic brain.</title>
        <authorList>
            <person name="Wang C."/>
            <person name="Chen X."/>
            <person name="Shi W."/>
            <person name="Wang F."/>
            <person name="Du Z."/>
            <person name="Li X."/>
            <person name="Yao Y."/>
            <person name="Liu T."/>
            <person name="Shao T."/>
            <person name="Li G."/>
            <person name="Hao A."/>
        </authorList>
    </citation>
    <scope>DEVELOPMENTAL STAGE</scope>
</reference>
<reference key="4">
    <citation type="journal article" date="2016" name="Biochem. Biophys. Res. Commun.">
        <title>Protein palmitoylation activate zygotic gene expression during the maternal-to-zygotic transition.</title>
        <authorList>
            <person name="Du Z."/>
            <person name="Chen X."/>
            <person name="Li X."/>
            <person name="He K."/>
            <person name="Ji S."/>
            <person name="Shi W."/>
            <person name="Hao A."/>
        </authorList>
    </citation>
    <scope>DEVELOPMENTAL STAGE</scope>
</reference>
<sequence length="361" mass="41921">MAPSGSRSFDCWRVLYWIPVLFISLIVAWSYYAYVVQLCIETIENMGEKTVYLLIYHLLFLMFVWSYWQTIYSKPMNPLKEFHLSHVDKELLEREDRRESQQEILRRIAKDLPIYTRTMSGAIRYCDRCLLLKPDRCHHCSACDMCILKMDHHCPWVNNCVGFANYKFFMLFLAYSLLYCLFVTATDMQYFIQFWTNGLPDTQAKFHIMFLFFAASTFSVSLAFLFAYHCWLVCKNRSTLEAFRAPAFQHGTDKNGFSLGAYKNFRQVFGDEKKYWLLPIFSSLGDGCSFPTCLVNPDPEQPSIPPGRNPSVKSAGESHPFPPKPLRESQSRLLNNGQTDGSEDRDKRGTSNPALTIEKET</sequence>
<dbReference type="EC" id="2.3.1.225" evidence="4"/>
<dbReference type="EC" id="2.3.1.-" evidence="1"/>
<dbReference type="EMBL" id="CR384105">
    <property type="status" value="NOT_ANNOTATED_CDS"/>
    <property type="molecule type" value="Genomic_DNA"/>
</dbReference>
<dbReference type="EMBL" id="BC090450">
    <property type="protein sequence ID" value="AAH90450.1"/>
    <property type="molecule type" value="mRNA"/>
</dbReference>
<dbReference type="EMBL" id="BC164809">
    <property type="protein sequence ID" value="AAI64809.1"/>
    <property type="molecule type" value="mRNA"/>
</dbReference>
<dbReference type="RefSeq" id="NP_001013510.1">
    <property type="nucleotide sequence ID" value="NM_001013492.1"/>
</dbReference>
<dbReference type="SMR" id="Q5BLG4"/>
<dbReference type="FunCoup" id="Q5BLG4">
    <property type="interactions" value="1787"/>
</dbReference>
<dbReference type="STRING" id="7955.ENSDARP00000019867"/>
<dbReference type="PaxDb" id="7955-ENSDARP00000019867"/>
<dbReference type="Ensembl" id="ENSDART00000011480">
    <property type="protein sequence ID" value="ENSDARP00000019867"/>
    <property type="gene ID" value="ENSDARG00000034757"/>
</dbReference>
<dbReference type="GeneID" id="541365"/>
<dbReference type="KEGG" id="dre:541365"/>
<dbReference type="AGR" id="ZFIN:ZDB-GENE-050320-58"/>
<dbReference type="CTD" id="51201"/>
<dbReference type="ZFIN" id="ZDB-GENE-050320-58">
    <property type="gene designation" value="zdhhc2"/>
</dbReference>
<dbReference type="eggNOG" id="KOG1315">
    <property type="taxonomic scope" value="Eukaryota"/>
</dbReference>
<dbReference type="HOGENOM" id="CLU_027721_1_3_1"/>
<dbReference type="InParanoid" id="Q5BLG4"/>
<dbReference type="OMA" id="CFVVMHI"/>
<dbReference type="OrthoDB" id="9909019at2759"/>
<dbReference type="PhylomeDB" id="Q5BLG4"/>
<dbReference type="TreeFam" id="TF316044"/>
<dbReference type="Reactome" id="R-DRE-5683826">
    <property type="pathway name" value="Surfactant metabolism"/>
</dbReference>
<dbReference type="PRO" id="PR:Q5BLG4"/>
<dbReference type="Proteomes" id="UP000000437">
    <property type="component" value="Alternate scaffold 14"/>
</dbReference>
<dbReference type="Proteomes" id="UP000000437">
    <property type="component" value="Chromosome 14"/>
</dbReference>
<dbReference type="Bgee" id="ENSDARG00000034757">
    <property type="expression patterns" value="Expressed in cardiac ventricle and 10 other cell types or tissues"/>
</dbReference>
<dbReference type="ExpressionAtlas" id="Q5BLG4">
    <property type="expression patterns" value="baseline"/>
</dbReference>
<dbReference type="GO" id="GO:0005783">
    <property type="term" value="C:endoplasmic reticulum"/>
    <property type="evidence" value="ECO:0000318"/>
    <property type="project" value="GO_Central"/>
</dbReference>
<dbReference type="GO" id="GO:0005789">
    <property type="term" value="C:endoplasmic reticulum membrane"/>
    <property type="evidence" value="ECO:0000250"/>
    <property type="project" value="UniProtKB"/>
</dbReference>
<dbReference type="GO" id="GO:0005794">
    <property type="term" value="C:Golgi apparatus"/>
    <property type="evidence" value="ECO:0000250"/>
    <property type="project" value="UniProtKB"/>
</dbReference>
<dbReference type="GO" id="GO:0000139">
    <property type="term" value="C:Golgi membrane"/>
    <property type="evidence" value="ECO:0007669"/>
    <property type="project" value="UniProtKB-SubCell"/>
</dbReference>
<dbReference type="GO" id="GO:0005886">
    <property type="term" value="C:plasma membrane"/>
    <property type="evidence" value="ECO:0000250"/>
    <property type="project" value="UniProtKB"/>
</dbReference>
<dbReference type="GO" id="GO:0014069">
    <property type="term" value="C:postsynaptic density"/>
    <property type="evidence" value="ECO:0000250"/>
    <property type="project" value="UniProtKB"/>
</dbReference>
<dbReference type="GO" id="GO:0098837">
    <property type="term" value="C:postsynaptic recycling endosome"/>
    <property type="evidence" value="ECO:0000250"/>
    <property type="project" value="UniProtKB"/>
</dbReference>
<dbReference type="GO" id="GO:0098944">
    <property type="term" value="C:postsynaptic recycling endosome membrane"/>
    <property type="evidence" value="ECO:0007669"/>
    <property type="project" value="UniProtKB-SubCell"/>
</dbReference>
<dbReference type="GO" id="GO:0019705">
    <property type="term" value="F:protein-cysteine S-myristoyltransferase activity"/>
    <property type="evidence" value="ECO:0007669"/>
    <property type="project" value="RHEA"/>
</dbReference>
<dbReference type="GO" id="GO:0019706">
    <property type="term" value="F:protein-cysteine S-palmitoyltransferase activity"/>
    <property type="evidence" value="ECO:0000318"/>
    <property type="project" value="GO_Central"/>
</dbReference>
<dbReference type="GO" id="GO:0140439">
    <property type="term" value="F:protein-cysteine S-stearoyltransferase activity"/>
    <property type="evidence" value="ECO:0007669"/>
    <property type="project" value="RHEA"/>
</dbReference>
<dbReference type="GO" id="GO:0018230">
    <property type="term" value="P:peptidyl-L-cysteine S-palmitoylation"/>
    <property type="evidence" value="ECO:0000250"/>
    <property type="project" value="UniProtKB"/>
</dbReference>
<dbReference type="GO" id="GO:0006612">
    <property type="term" value="P:protein targeting to membrane"/>
    <property type="evidence" value="ECO:0000318"/>
    <property type="project" value="GO_Central"/>
</dbReference>
<dbReference type="GO" id="GO:0007416">
    <property type="term" value="P:synapse assembly"/>
    <property type="evidence" value="ECO:0000318"/>
    <property type="project" value="GO_Central"/>
</dbReference>
<dbReference type="GO" id="GO:0016188">
    <property type="term" value="P:synaptic vesicle maturation"/>
    <property type="evidence" value="ECO:0000318"/>
    <property type="project" value="GO_Central"/>
</dbReference>
<dbReference type="InterPro" id="IPR001594">
    <property type="entry name" value="Palmitoyltrfase_DHHC"/>
</dbReference>
<dbReference type="InterPro" id="IPR039859">
    <property type="entry name" value="PFA4/ZDH16/20/ERF2-like"/>
</dbReference>
<dbReference type="PANTHER" id="PTHR12246">
    <property type="entry name" value="PALMITOYLTRANSFERASE ZDHHC16"/>
    <property type="match status" value="1"/>
</dbReference>
<dbReference type="Pfam" id="PF01529">
    <property type="entry name" value="DHHC"/>
    <property type="match status" value="1"/>
</dbReference>
<dbReference type="PROSITE" id="PS50216">
    <property type="entry name" value="DHHC"/>
    <property type="match status" value="1"/>
</dbReference>